<proteinExistence type="evidence at transcript level"/>
<evidence type="ECO:0000250" key="1"/>
<evidence type="ECO:0000250" key="2">
    <source>
        <dbReference type="UniProtKB" id="P00806"/>
    </source>
</evidence>
<evidence type="ECO:0000250" key="3">
    <source>
        <dbReference type="UniProtKB" id="Q8INK6"/>
    </source>
</evidence>
<evidence type="ECO:0000255" key="4"/>
<evidence type="ECO:0000269" key="5">
    <source>
    </source>
</evidence>
<evidence type="ECO:0000269" key="6">
    <source>
    </source>
</evidence>
<evidence type="ECO:0000305" key="7"/>
<feature type="signal peptide" evidence="4">
    <location>
        <begin position="1"/>
        <end position="20"/>
    </location>
</feature>
<feature type="chain" id="PRO_0000023912" description="Peptidoglycan-recognition protein SC2">
    <location>
        <begin position="21"/>
        <end position="184"/>
    </location>
</feature>
<feature type="domain" description="N-acetylmuramoyl-L-alanine amidase" evidence="4">
    <location>
        <begin position="45"/>
        <end position="169"/>
    </location>
</feature>
<feature type="binding site" evidence="3">
    <location>
        <position position="50"/>
    </location>
    <ligand>
        <name>Zn(2+)</name>
        <dbReference type="ChEBI" id="CHEBI:29105"/>
    </ligand>
</feature>
<feature type="binding site" evidence="3">
    <location>
        <position position="159"/>
    </location>
    <ligand>
        <name>Zn(2+)</name>
        <dbReference type="ChEBI" id="CHEBI:29105"/>
    </ligand>
</feature>
<feature type="binding site" evidence="3">
    <location>
        <position position="167"/>
    </location>
    <ligand>
        <name>Zn(2+)</name>
        <dbReference type="ChEBI" id="CHEBI:29105"/>
    </ligand>
</feature>
<feature type="site" description="Important for catalytic activity; essential for amidase activity and zinc hydrate coordination" evidence="2">
    <location>
        <position position="85"/>
    </location>
</feature>
<feature type="disulfide bond" evidence="3">
    <location>
        <begin position="57"/>
        <end position="63"/>
    </location>
</feature>
<feature type="sequence variant" description="In strain: DI7, Draveil, KY024, KY038, Loua, Monty5, Tahiti and ZW141.">
    <original>I</original>
    <variation>V</variation>
    <location>
        <position position="7"/>
    </location>
</feature>
<feature type="sequence variant" description="In strain: DI7, Draveil, KY024, KY038, Loua, Monty5 and ZW141.">
    <original>I</original>
    <variation>V</variation>
    <location>
        <position position="24"/>
    </location>
</feature>
<feature type="sequence variant" description="In strain: KY024, KY038 and ZW141.">
    <original>A</original>
    <variation>T</variation>
    <location>
        <position position="72"/>
    </location>
</feature>
<feature type="sequence variant" description="In strain: ZW141.">
    <original>N</original>
    <variation>H</variation>
    <location>
        <position position="171"/>
    </location>
</feature>
<keyword id="KW-1015">Disulfide bond</keyword>
<keyword id="KW-0378">Hydrolase</keyword>
<keyword id="KW-0391">Immunity</keyword>
<keyword id="KW-0399">Innate immunity</keyword>
<keyword id="KW-0479">Metal-binding</keyword>
<keyword id="KW-1185">Reference proteome</keyword>
<keyword id="KW-0964">Secreted</keyword>
<keyword id="KW-0732">Signal</keyword>
<keyword id="KW-0862">Zinc</keyword>
<gene>
    <name type="primary">PGRP-SC2</name>
    <name type="ORF">CG14745</name>
</gene>
<reference key="1">
    <citation type="journal article" date="2003" name="J. Mol. Evol.">
        <title>The evolution of parasite recognition genes in the innate immune system: purifying selection on Drosophila melanogaster peptidoglycan recognition proteins.</title>
        <authorList>
            <person name="Jiggins F.M."/>
            <person name="Hurst G.D.D."/>
        </authorList>
    </citation>
    <scope>NUCLEOTIDE SEQUENCE [GENOMIC DNA]</scope>
    <source>
        <strain>DI7</strain>
        <strain>Draveil</strain>
        <strain>KY024</strain>
        <strain>KY038</strain>
        <strain>Loua</strain>
        <strain>Monty5</strain>
        <strain>P.bourg</strain>
        <strain>S30</strain>
        <strain>Tahiti</strain>
        <strain>Texas</strain>
        <strain>ZW141</strain>
    </source>
</reference>
<reference key="2">
    <citation type="journal article" date="2000" name="Science">
        <title>The genome sequence of Drosophila melanogaster.</title>
        <authorList>
            <person name="Adams M.D."/>
            <person name="Celniker S.E."/>
            <person name="Holt R.A."/>
            <person name="Evans C.A."/>
            <person name="Gocayne J.D."/>
            <person name="Amanatides P.G."/>
            <person name="Scherer S.E."/>
            <person name="Li P.W."/>
            <person name="Hoskins R.A."/>
            <person name="Galle R.F."/>
            <person name="George R.A."/>
            <person name="Lewis S.E."/>
            <person name="Richards S."/>
            <person name="Ashburner M."/>
            <person name="Henderson S.N."/>
            <person name="Sutton G.G."/>
            <person name="Wortman J.R."/>
            <person name="Yandell M.D."/>
            <person name="Zhang Q."/>
            <person name="Chen L.X."/>
            <person name="Brandon R.C."/>
            <person name="Rogers Y.-H.C."/>
            <person name="Blazej R.G."/>
            <person name="Champe M."/>
            <person name="Pfeiffer B.D."/>
            <person name="Wan K.H."/>
            <person name="Doyle C."/>
            <person name="Baxter E.G."/>
            <person name="Helt G."/>
            <person name="Nelson C.R."/>
            <person name="Miklos G.L.G."/>
            <person name="Abril J.F."/>
            <person name="Agbayani A."/>
            <person name="An H.-J."/>
            <person name="Andrews-Pfannkoch C."/>
            <person name="Baldwin D."/>
            <person name="Ballew R.M."/>
            <person name="Basu A."/>
            <person name="Baxendale J."/>
            <person name="Bayraktaroglu L."/>
            <person name="Beasley E.M."/>
            <person name="Beeson K.Y."/>
            <person name="Benos P.V."/>
            <person name="Berman B.P."/>
            <person name="Bhandari D."/>
            <person name="Bolshakov S."/>
            <person name="Borkova D."/>
            <person name="Botchan M.R."/>
            <person name="Bouck J."/>
            <person name="Brokstein P."/>
            <person name="Brottier P."/>
            <person name="Burtis K.C."/>
            <person name="Busam D.A."/>
            <person name="Butler H."/>
            <person name="Cadieu E."/>
            <person name="Center A."/>
            <person name="Chandra I."/>
            <person name="Cherry J.M."/>
            <person name="Cawley S."/>
            <person name="Dahlke C."/>
            <person name="Davenport L.B."/>
            <person name="Davies P."/>
            <person name="de Pablos B."/>
            <person name="Delcher A."/>
            <person name="Deng Z."/>
            <person name="Mays A.D."/>
            <person name="Dew I."/>
            <person name="Dietz S.M."/>
            <person name="Dodson K."/>
            <person name="Doup L.E."/>
            <person name="Downes M."/>
            <person name="Dugan-Rocha S."/>
            <person name="Dunkov B.C."/>
            <person name="Dunn P."/>
            <person name="Durbin K.J."/>
            <person name="Evangelista C.C."/>
            <person name="Ferraz C."/>
            <person name="Ferriera S."/>
            <person name="Fleischmann W."/>
            <person name="Fosler C."/>
            <person name="Gabrielian A.E."/>
            <person name="Garg N.S."/>
            <person name="Gelbart W.M."/>
            <person name="Glasser K."/>
            <person name="Glodek A."/>
            <person name="Gong F."/>
            <person name="Gorrell J.H."/>
            <person name="Gu Z."/>
            <person name="Guan P."/>
            <person name="Harris M."/>
            <person name="Harris N.L."/>
            <person name="Harvey D.A."/>
            <person name="Heiman T.J."/>
            <person name="Hernandez J.R."/>
            <person name="Houck J."/>
            <person name="Hostin D."/>
            <person name="Houston K.A."/>
            <person name="Howland T.J."/>
            <person name="Wei M.-H."/>
            <person name="Ibegwam C."/>
            <person name="Jalali M."/>
            <person name="Kalush F."/>
            <person name="Karpen G.H."/>
            <person name="Ke Z."/>
            <person name="Kennison J.A."/>
            <person name="Ketchum K.A."/>
            <person name="Kimmel B.E."/>
            <person name="Kodira C.D."/>
            <person name="Kraft C.L."/>
            <person name="Kravitz S."/>
            <person name="Kulp D."/>
            <person name="Lai Z."/>
            <person name="Lasko P."/>
            <person name="Lei Y."/>
            <person name="Levitsky A.A."/>
            <person name="Li J.H."/>
            <person name="Li Z."/>
            <person name="Liang Y."/>
            <person name="Lin X."/>
            <person name="Liu X."/>
            <person name="Mattei B."/>
            <person name="McIntosh T.C."/>
            <person name="McLeod M.P."/>
            <person name="McPherson D."/>
            <person name="Merkulov G."/>
            <person name="Milshina N.V."/>
            <person name="Mobarry C."/>
            <person name="Morris J."/>
            <person name="Moshrefi A."/>
            <person name="Mount S.M."/>
            <person name="Moy M."/>
            <person name="Murphy B."/>
            <person name="Murphy L."/>
            <person name="Muzny D.M."/>
            <person name="Nelson D.L."/>
            <person name="Nelson D.R."/>
            <person name="Nelson K.A."/>
            <person name="Nixon K."/>
            <person name="Nusskern D.R."/>
            <person name="Pacleb J.M."/>
            <person name="Palazzolo M."/>
            <person name="Pittman G.S."/>
            <person name="Pan S."/>
            <person name="Pollard J."/>
            <person name="Puri V."/>
            <person name="Reese M.G."/>
            <person name="Reinert K."/>
            <person name="Remington K."/>
            <person name="Saunders R.D.C."/>
            <person name="Scheeler F."/>
            <person name="Shen H."/>
            <person name="Shue B.C."/>
            <person name="Siden-Kiamos I."/>
            <person name="Simpson M."/>
            <person name="Skupski M.P."/>
            <person name="Smith T.J."/>
            <person name="Spier E."/>
            <person name="Spradling A.C."/>
            <person name="Stapleton M."/>
            <person name="Strong R."/>
            <person name="Sun E."/>
            <person name="Svirskas R."/>
            <person name="Tector C."/>
            <person name="Turner R."/>
            <person name="Venter E."/>
            <person name="Wang A.H."/>
            <person name="Wang X."/>
            <person name="Wang Z.-Y."/>
            <person name="Wassarman D.A."/>
            <person name="Weinstock G.M."/>
            <person name="Weissenbach J."/>
            <person name="Williams S.M."/>
            <person name="Woodage T."/>
            <person name="Worley K.C."/>
            <person name="Wu D."/>
            <person name="Yang S."/>
            <person name="Yao Q.A."/>
            <person name="Ye J."/>
            <person name="Yeh R.-F."/>
            <person name="Zaveri J.S."/>
            <person name="Zhan M."/>
            <person name="Zhang G."/>
            <person name="Zhao Q."/>
            <person name="Zheng L."/>
            <person name="Zheng X.H."/>
            <person name="Zhong F.N."/>
            <person name="Zhong W."/>
            <person name="Zhou X."/>
            <person name="Zhu S.C."/>
            <person name="Zhu X."/>
            <person name="Smith H.O."/>
            <person name="Gibbs R.A."/>
            <person name="Myers E.W."/>
            <person name="Rubin G.M."/>
            <person name="Venter J.C."/>
        </authorList>
    </citation>
    <scope>NUCLEOTIDE SEQUENCE [LARGE SCALE GENOMIC DNA]</scope>
    <source>
        <strain>Berkeley</strain>
    </source>
</reference>
<reference key="3">
    <citation type="journal article" date="2002" name="Genome Biol.">
        <title>Annotation of the Drosophila melanogaster euchromatic genome: a systematic review.</title>
        <authorList>
            <person name="Misra S."/>
            <person name="Crosby M.A."/>
            <person name="Mungall C.J."/>
            <person name="Matthews B.B."/>
            <person name="Campbell K.S."/>
            <person name="Hradecky P."/>
            <person name="Huang Y."/>
            <person name="Kaminker J.S."/>
            <person name="Millburn G.H."/>
            <person name="Prochnik S.E."/>
            <person name="Smith C.D."/>
            <person name="Tupy J.L."/>
            <person name="Whitfield E.J."/>
            <person name="Bayraktaroglu L."/>
            <person name="Berman B.P."/>
            <person name="Bettencourt B.R."/>
            <person name="Celniker S.E."/>
            <person name="de Grey A.D.N.J."/>
            <person name="Drysdale R.A."/>
            <person name="Harris N.L."/>
            <person name="Richter J."/>
            <person name="Russo S."/>
            <person name="Schroeder A.J."/>
            <person name="Shu S.Q."/>
            <person name="Stapleton M."/>
            <person name="Yamada C."/>
            <person name="Ashburner M."/>
            <person name="Gelbart W.M."/>
            <person name="Rubin G.M."/>
            <person name="Lewis S.E."/>
        </authorList>
    </citation>
    <scope>GENOME REANNOTATION</scope>
    <source>
        <strain>Berkeley</strain>
    </source>
</reference>
<reference key="4">
    <citation type="journal article" date="2000" name="Proc. Natl. Acad. Sci. U.S.A.">
        <title>A family of peptidoglycan recognition proteins in the fruit fly Drosophila melanogaster.</title>
        <authorList>
            <person name="Werner T."/>
            <person name="Liu G."/>
            <person name="Kang D."/>
            <person name="Ekengren S."/>
            <person name="Steiner H."/>
            <person name="Hultmark D."/>
        </authorList>
    </citation>
    <scope>TISSUE SPECIFICITY</scope>
    <scope>INDUCTION</scope>
</reference>
<reference key="5">
    <citation type="journal article" date="2002" name="EMBO J.">
        <title>The Toll and Imd pathways are the major regulators of the immune response in Drosophila.</title>
        <authorList>
            <person name="De Gregorio E."/>
            <person name="Spellman P.T."/>
            <person name="Tzou P."/>
            <person name="Rubin G.M."/>
            <person name="Lemaitre B."/>
        </authorList>
    </citation>
    <scope>INDUCTION</scope>
</reference>
<name>PGSC2_DROME</name>
<accession>Q9V4X2</accession>
<accession>Q70PT2</accession>
<accession>Q70PT3</accession>
<accession>Q70PT5</accession>
<accession>Q70PT6</accession>
<sequence length="184" mass="19829">MANKALILLAVLFCAQAVLGVTIISKSEWGGRSATSKTSLANYLSYAVIHHTAGNYCSTKAACITQLQNIQAYHMDSLGWADIGYNFLIGGDGNVYEGRGWNVMGAHATNWNSKSIGISFLGNYNTNTLTSAQITAAKGLLSDAVSRGQIVSGYILYGHRQVGSTECPGTNIWNEIRTWSNWKA</sequence>
<dbReference type="EC" id="3.5.1.28"/>
<dbReference type="EMBL" id="AJ556612">
    <property type="protein sequence ID" value="CAD89177.1"/>
    <property type="molecule type" value="Genomic_DNA"/>
</dbReference>
<dbReference type="EMBL" id="AJ556613">
    <property type="protein sequence ID" value="CAD89178.1"/>
    <property type="molecule type" value="Genomic_DNA"/>
</dbReference>
<dbReference type="EMBL" id="AJ556614">
    <property type="protein sequence ID" value="CAD89179.1"/>
    <property type="molecule type" value="Genomic_DNA"/>
</dbReference>
<dbReference type="EMBL" id="AJ556615">
    <property type="protein sequence ID" value="CAD89180.1"/>
    <property type="molecule type" value="Genomic_DNA"/>
</dbReference>
<dbReference type="EMBL" id="AJ556616">
    <property type="protein sequence ID" value="CAD89181.1"/>
    <property type="molecule type" value="Genomic_DNA"/>
</dbReference>
<dbReference type="EMBL" id="AJ556617">
    <property type="protein sequence ID" value="CAD89182.1"/>
    <property type="molecule type" value="Genomic_DNA"/>
</dbReference>
<dbReference type="EMBL" id="AJ556618">
    <property type="protein sequence ID" value="CAD89183.1"/>
    <property type="molecule type" value="Genomic_DNA"/>
</dbReference>
<dbReference type="EMBL" id="AJ556619">
    <property type="protein sequence ID" value="CAD89184.1"/>
    <property type="molecule type" value="Genomic_DNA"/>
</dbReference>
<dbReference type="EMBL" id="AJ556620">
    <property type="protein sequence ID" value="CAD89185.1"/>
    <property type="molecule type" value="Genomic_DNA"/>
</dbReference>
<dbReference type="EMBL" id="AJ556621">
    <property type="protein sequence ID" value="CAD89186.1"/>
    <property type="molecule type" value="Genomic_DNA"/>
</dbReference>
<dbReference type="EMBL" id="AJ556622">
    <property type="protein sequence ID" value="CAD89187.1"/>
    <property type="molecule type" value="Genomic_DNA"/>
</dbReference>
<dbReference type="EMBL" id="AE013599">
    <property type="protein sequence ID" value="AAF59051.1"/>
    <property type="molecule type" value="Genomic_DNA"/>
</dbReference>
<dbReference type="RefSeq" id="NP_610410.1">
    <property type="nucleotide sequence ID" value="NM_136566.2"/>
</dbReference>
<dbReference type="SMR" id="Q9V4X2"/>
<dbReference type="FunCoup" id="Q9V4X2">
    <property type="interactions" value="81"/>
</dbReference>
<dbReference type="STRING" id="7227.FBpp0087788"/>
<dbReference type="PaxDb" id="7227-FBpp0087788"/>
<dbReference type="EnsemblMetazoa" id="FBtr0088709">
    <property type="protein sequence ID" value="FBpp0087788"/>
    <property type="gene ID" value="FBgn0043575"/>
</dbReference>
<dbReference type="GeneID" id="35862"/>
<dbReference type="KEGG" id="dme:Dmel_CG14745"/>
<dbReference type="AGR" id="FB:FBgn0043575"/>
<dbReference type="CTD" id="35862"/>
<dbReference type="FlyBase" id="FBgn0043575">
    <property type="gene designation" value="PGRP-SC2"/>
</dbReference>
<dbReference type="VEuPathDB" id="VectorBase:FBgn0043575"/>
<dbReference type="eggNOG" id="ENOG502S2KY">
    <property type="taxonomic scope" value="Eukaryota"/>
</dbReference>
<dbReference type="GeneTree" id="ENSGT00940000166535"/>
<dbReference type="HOGENOM" id="CLU_037559_3_2_1"/>
<dbReference type="InParanoid" id="Q9V4X2"/>
<dbReference type="OMA" id="CCSPIVP"/>
<dbReference type="OrthoDB" id="10001926at2759"/>
<dbReference type="PhylomeDB" id="Q9V4X2"/>
<dbReference type="BioGRID-ORCS" id="35862">
    <property type="hits" value="0 hits in 3 CRISPR screens"/>
</dbReference>
<dbReference type="GenomeRNAi" id="35862"/>
<dbReference type="PRO" id="PR:Q9V4X2"/>
<dbReference type="Proteomes" id="UP000000803">
    <property type="component" value="Chromosome 2R"/>
</dbReference>
<dbReference type="Bgee" id="FBgn0043575">
    <property type="expression patterns" value="Expressed in midgut large flat cell (Drosophila) in digestive tract and 55 other cell types or tissues"/>
</dbReference>
<dbReference type="ExpressionAtlas" id="Q9V4X2">
    <property type="expression patterns" value="baseline and differential"/>
</dbReference>
<dbReference type="GO" id="GO:0005576">
    <property type="term" value="C:extracellular region"/>
    <property type="evidence" value="ECO:0007669"/>
    <property type="project" value="UniProtKB-SubCell"/>
</dbReference>
<dbReference type="GO" id="GO:0008745">
    <property type="term" value="F:N-acetylmuramoyl-L-alanine amidase activity"/>
    <property type="evidence" value="ECO:0000250"/>
    <property type="project" value="FlyBase"/>
</dbReference>
<dbReference type="GO" id="GO:0042834">
    <property type="term" value="F:peptidoglycan binding"/>
    <property type="evidence" value="ECO:0007669"/>
    <property type="project" value="InterPro"/>
</dbReference>
<dbReference type="GO" id="GO:0008270">
    <property type="term" value="F:zinc ion binding"/>
    <property type="evidence" value="ECO:0007669"/>
    <property type="project" value="InterPro"/>
</dbReference>
<dbReference type="GO" id="GO:0045087">
    <property type="term" value="P:innate immune response"/>
    <property type="evidence" value="ECO:0007669"/>
    <property type="project" value="UniProtKB-KW"/>
</dbReference>
<dbReference type="GO" id="GO:0002814">
    <property type="term" value="P:negative regulation of biosynthetic process of antibacterial peptides active against Gram-negative bacteria"/>
    <property type="evidence" value="ECO:0000315"/>
    <property type="project" value="FlyBase"/>
</dbReference>
<dbReference type="GO" id="GO:0061060">
    <property type="term" value="P:negative regulation of peptidoglycan recognition protein signaling pathway"/>
    <property type="evidence" value="ECO:0000315"/>
    <property type="project" value="FlyBase"/>
</dbReference>
<dbReference type="GO" id="GO:0009253">
    <property type="term" value="P:peptidoglycan catabolic process"/>
    <property type="evidence" value="ECO:0000250"/>
    <property type="project" value="FlyBase"/>
</dbReference>
<dbReference type="GO" id="GO:0160032">
    <property type="term" value="P:Toll receptor ligand protein activation cascade"/>
    <property type="evidence" value="ECO:0000315"/>
    <property type="project" value="FlyBase"/>
</dbReference>
<dbReference type="CDD" id="cd06583">
    <property type="entry name" value="PGRP"/>
    <property type="match status" value="1"/>
</dbReference>
<dbReference type="FunFam" id="3.40.80.10:FF:000001">
    <property type="entry name" value="Peptidoglycan recognition protein 1"/>
    <property type="match status" value="1"/>
</dbReference>
<dbReference type="Gene3D" id="3.40.80.10">
    <property type="entry name" value="Peptidoglycan recognition protein-like"/>
    <property type="match status" value="1"/>
</dbReference>
<dbReference type="InterPro" id="IPR036505">
    <property type="entry name" value="Amidase/PGRP_sf"/>
</dbReference>
<dbReference type="InterPro" id="IPR002502">
    <property type="entry name" value="Amidase_domain"/>
</dbReference>
<dbReference type="InterPro" id="IPR017331">
    <property type="entry name" value="Peptidoglycan_recognition"/>
</dbReference>
<dbReference type="InterPro" id="IPR015510">
    <property type="entry name" value="PGRP"/>
</dbReference>
<dbReference type="InterPro" id="IPR006619">
    <property type="entry name" value="PGRP_domain_met/bac"/>
</dbReference>
<dbReference type="PANTHER" id="PTHR11022">
    <property type="entry name" value="PEPTIDOGLYCAN RECOGNITION PROTEIN"/>
    <property type="match status" value="1"/>
</dbReference>
<dbReference type="PANTHER" id="PTHR11022:SF75">
    <property type="entry name" value="PEPTIDOGLYCAN-RECOGNITION PROTEIN SB1-RELATED"/>
    <property type="match status" value="1"/>
</dbReference>
<dbReference type="Pfam" id="PF01510">
    <property type="entry name" value="Amidase_2"/>
    <property type="match status" value="1"/>
</dbReference>
<dbReference type="PIRSF" id="PIRSF037945">
    <property type="entry name" value="PGRPs"/>
    <property type="match status" value="1"/>
</dbReference>
<dbReference type="SMART" id="SM00644">
    <property type="entry name" value="Ami_2"/>
    <property type="match status" value="1"/>
</dbReference>
<dbReference type="SMART" id="SM00701">
    <property type="entry name" value="PGRP"/>
    <property type="match status" value="1"/>
</dbReference>
<dbReference type="SUPFAM" id="SSF55846">
    <property type="entry name" value="N-acetylmuramoyl-L-alanine amidase-like"/>
    <property type="match status" value="1"/>
</dbReference>
<comment type="function">
    <text evidence="1">N-acetylmuramyl-L-alanine amidase involved in innate immunity by degrading bacterial peptidoglycans (PGN). Probably plays a scavenger role by digesting biologically active PGN into biologically inactive fragments. Has no direct bacteriolytic activity (By similarity).</text>
</comment>
<comment type="catalytic activity">
    <reaction>
        <text>Hydrolyzes the link between N-acetylmuramoyl residues and L-amino acid residues in certain cell-wall glycopeptides.</text>
        <dbReference type="EC" id="3.5.1.28"/>
    </reaction>
</comment>
<comment type="cofactor">
    <cofactor evidence="3">
        <name>Zn(2+)</name>
        <dbReference type="ChEBI" id="CHEBI:29105"/>
    </cofactor>
</comment>
<comment type="subcellular location">
    <subcellularLocation>
        <location evidence="7">Secreted</location>
    </subcellularLocation>
</comment>
<comment type="tissue specificity">
    <text evidence="5">Constitutively expressed at high level in gut, in addition to the induced expression in fat body.</text>
</comment>
<comment type="induction">
    <text evidence="5 6">Strongly up-regulated by PGN from B.subtilis. Regulated by both imd/Relish and Toll pathways.</text>
</comment>
<comment type="similarity">
    <text evidence="7">Belongs to the N-acetylmuramoyl-L-alanine amidase 2 family.</text>
</comment>
<protein>
    <recommendedName>
        <fullName>Peptidoglycan-recognition protein SC2</fullName>
        <ecNumber>3.5.1.28</ecNumber>
    </recommendedName>
</protein>
<organism>
    <name type="scientific">Drosophila melanogaster</name>
    <name type="common">Fruit fly</name>
    <dbReference type="NCBI Taxonomy" id="7227"/>
    <lineage>
        <taxon>Eukaryota</taxon>
        <taxon>Metazoa</taxon>
        <taxon>Ecdysozoa</taxon>
        <taxon>Arthropoda</taxon>
        <taxon>Hexapoda</taxon>
        <taxon>Insecta</taxon>
        <taxon>Pterygota</taxon>
        <taxon>Neoptera</taxon>
        <taxon>Endopterygota</taxon>
        <taxon>Diptera</taxon>
        <taxon>Brachycera</taxon>
        <taxon>Muscomorpha</taxon>
        <taxon>Ephydroidea</taxon>
        <taxon>Drosophilidae</taxon>
        <taxon>Drosophila</taxon>
        <taxon>Sophophora</taxon>
    </lineage>
</organism>